<gene>
    <name evidence="1" type="primary">aroQ</name>
    <name type="ordered locus">BCB4264_A4309</name>
</gene>
<keyword id="KW-0028">Amino-acid biosynthesis</keyword>
<keyword id="KW-0057">Aromatic amino acid biosynthesis</keyword>
<keyword id="KW-0456">Lyase</keyword>
<evidence type="ECO:0000255" key="1">
    <source>
        <dbReference type="HAMAP-Rule" id="MF_00169"/>
    </source>
</evidence>
<feature type="chain" id="PRO_1000118274" description="3-dehydroquinate dehydratase">
    <location>
        <begin position="1"/>
        <end position="146"/>
    </location>
</feature>
<feature type="active site" description="Proton acceptor" evidence="1">
    <location>
        <position position="23"/>
    </location>
</feature>
<feature type="active site" description="Proton donor" evidence="1">
    <location>
        <position position="100"/>
    </location>
</feature>
<feature type="binding site" evidence="1">
    <location>
        <position position="74"/>
    </location>
    <ligand>
        <name>substrate</name>
    </ligand>
</feature>
<feature type="binding site" evidence="1">
    <location>
        <position position="80"/>
    </location>
    <ligand>
        <name>substrate</name>
    </ligand>
</feature>
<feature type="binding site" evidence="1">
    <location>
        <position position="87"/>
    </location>
    <ligand>
        <name>substrate</name>
    </ligand>
</feature>
<feature type="binding site" evidence="1">
    <location>
        <begin position="101"/>
        <end position="102"/>
    </location>
    <ligand>
        <name>substrate</name>
    </ligand>
</feature>
<feature type="binding site" evidence="1">
    <location>
        <position position="111"/>
    </location>
    <ligand>
        <name>substrate</name>
    </ligand>
</feature>
<feature type="site" description="Transition state stabilizer" evidence="1">
    <location>
        <position position="18"/>
    </location>
</feature>
<accession>B7HB70</accession>
<dbReference type="EC" id="4.2.1.10" evidence="1"/>
<dbReference type="EMBL" id="CP001176">
    <property type="protein sequence ID" value="ACK62135.1"/>
    <property type="molecule type" value="Genomic_DNA"/>
</dbReference>
<dbReference type="RefSeq" id="WP_000735146.1">
    <property type="nucleotide sequence ID" value="NC_011725.1"/>
</dbReference>
<dbReference type="SMR" id="B7HB70"/>
<dbReference type="KEGG" id="bcb:BCB4264_A4309"/>
<dbReference type="HOGENOM" id="CLU_090968_3_0_9"/>
<dbReference type="UniPathway" id="UPA00053">
    <property type="reaction ID" value="UER00086"/>
</dbReference>
<dbReference type="Proteomes" id="UP000007096">
    <property type="component" value="Chromosome"/>
</dbReference>
<dbReference type="GO" id="GO:0003855">
    <property type="term" value="F:3-dehydroquinate dehydratase activity"/>
    <property type="evidence" value="ECO:0007669"/>
    <property type="project" value="UniProtKB-UniRule"/>
</dbReference>
<dbReference type="GO" id="GO:0008652">
    <property type="term" value="P:amino acid biosynthetic process"/>
    <property type="evidence" value="ECO:0007669"/>
    <property type="project" value="UniProtKB-KW"/>
</dbReference>
<dbReference type="GO" id="GO:0009073">
    <property type="term" value="P:aromatic amino acid family biosynthetic process"/>
    <property type="evidence" value="ECO:0007669"/>
    <property type="project" value="UniProtKB-KW"/>
</dbReference>
<dbReference type="GO" id="GO:0009423">
    <property type="term" value="P:chorismate biosynthetic process"/>
    <property type="evidence" value="ECO:0007669"/>
    <property type="project" value="UniProtKB-UniRule"/>
</dbReference>
<dbReference type="GO" id="GO:0019631">
    <property type="term" value="P:quinate catabolic process"/>
    <property type="evidence" value="ECO:0007669"/>
    <property type="project" value="TreeGrafter"/>
</dbReference>
<dbReference type="CDD" id="cd00466">
    <property type="entry name" value="DHQase_II"/>
    <property type="match status" value="1"/>
</dbReference>
<dbReference type="Gene3D" id="3.40.50.9100">
    <property type="entry name" value="Dehydroquinase, class II"/>
    <property type="match status" value="1"/>
</dbReference>
<dbReference type="HAMAP" id="MF_00169">
    <property type="entry name" value="AroQ"/>
    <property type="match status" value="1"/>
</dbReference>
<dbReference type="InterPro" id="IPR001874">
    <property type="entry name" value="DHquinase_II"/>
</dbReference>
<dbReference type="InterPro" id="IPR018509">
    <property type="entry name" value="DHquinase_II_CS"/>
</dbReference>
<dbReference type="InterPro" id="IPR036441">
    <property type="entry name" value="DHquinase_II_sf"/>
</dbReference>
<dbReference type="NCBIfam" id="TIGR01088">
    <property type="entry name" value="aroQ"/>
    <property type="match status" value="1"/>
</dbReference>
<dbReference type="NCBIfam" id="NF003805">
    <property type="entry name" value="PRK05395.1-2"/>
    <property type="match status" value="1"/>
</dbReference>
<dbReference type="NCBIfam" id="NF003806">
    <property type="entry name" value="PRK05395.1-3"/>
    <property type="match status" value="1"/>
</dbReference>
<dbReference type="NCBIfam" id="NF003807">
    <property type="entry name" value="PRK05395.1-4"/>
    <property type="match status" value="1"/>
</dbReference>
<dbReference type="PANTHER" id="PTHR21272">
    <property type="entry name" value="CATABOLIC 3-DEHYDROQUINASE"/>
    <property type="match status" value="1"/>
</dbReference>
<dbReference type="PANTHER" id="PTHR21272:SF3">
    <property type="entry name" value="CATABOLIC 3-DEHYDROQUINASE"/>
    <property type="match status" value="1"/>
</dbReference>
<dbReference type="Pfam" id="PF01220">
    <property type="entry name" value="DHquinase_II"/>
    <property type="match status" value="1"/>
</dbReference>
<dbReference type="PIRSF" id="PIRSF001399">
    <property type="entry name" value="DHquinase_II"/>
    <property type="match status" value="1"/>
</dbReference>
<dbReference type="SUPFAM" id="SSF52304">
    <property type="entry name" value="Type II 3-dehydroquinate dehydratase"/>
    <property type="match status" value="1"/>
</dbReference>
<dbReference type="PROSITE" id="PS01029">
    <property type="entry name" value="DEHYDROQUINASE_II"/>
    <property type="match status" value="1"/>
</dbReference>
<proteinExistence type="inferred from homology"/>
<organism>
    <name type="scientific">Bacillus cereus (strain B4264)</name>
    <dbReference type="NCBI Taxonomy" id="405532"/>
    <lineage>
        <taxon>Bacteria</taxon>
        <taxon>Bacillati</taxon>
        <taxon>Bacillota</taxon>
        <taxon>Bacilli</taxon>
        <taxon>Bacillales</taxon>
        <taxon>Bacillaceae</taxon>
        <taxon>Bacillus</taxon>
        <taxon>Bacillus cereus group</taxon>
    </lineage>
</organism>
<sequence length="146" mass="16193">MKKLLLVNGPNLNRLGVREVNVYGKGTLATLEVDMKQEAETMGVELECFQSNHEGAIIDIIHEAEDIYKGIILNPGAFTHYSYAIRDAIASISIPVIEVHISNIHQRESFRHESVTAAVCAGQIVGFGFYGYKLALFALMEKLREA</sequence>
<reference key="1">
    <citation type="submission" date="2008-10" db="EMBL/GenBank/DDBJ databases">
        <title>Genome sequence of Bacillus cereus B4264.</title>
        <authorList>
            <person name="Dodson R.J."/>
            <person name="Durkin A.S."/>
            <person name="Rosovitz M.J."/>
            <person name="Rasko D.A."/>
            <person name="Hoffmaster A."/>
            <person name="Ravel J."/>
            <person name="Sutton G."/>
        </authorList>
    </citation>
    <scope>NUCLEOTIDE SEQUENCE [LARGE SCALE GENOMIC DNA]</scope>
    <source>
        <strain>B4264</strain>
    </source>
</reference>
<name>AROQ_BACC4</name>
<comment type="function">
    <text evidence="1">Catalyzes a trans-dehydration via an enolate intermediate.</text>
</comment>
<comment type="catalytic activity">
    <reaction evidence="1">
        <text>3-dehydroquinate = 3-dehydroshikimate + H2O</text>
        <dbReference type="Rhea" id="RHEA:21096"/>
        <dbReference type="ChEBI" id="CHEBI:15377"/>
        <dbReference type="ChEBI" id="CHEBI:16630"/>
        <dbReference type="ChEBI" id="CHEBI:32364"/>
        <dbReference type="EC" id="4.2.1.10"/>
    </reaction>
</comment>
<comment type="pathway">
    <text evidence="1">Metabolic intermediate biosynthesis; chorismate biosynthesis; chorismate from D-erythrose 4-phosphate and phosphoenolpyruvate: step 3/7.</text>
</comment>
<comment type="subunit">
    <text evidence="1">Homododecamer.</text>
</comment>
<comment type="similarity">
    <text evidence="1">Belongs to the type-II 3-dehydroquinase family.</text>
</comment>
<protein>
    <recommendedName>
        <fullName evidence="1">3-dehydroquinate dehydratase</fullName>
        <shortName evidence="1">3-dehydroquinase</shortName>
        <ecNumber evidence="1">4.2.1.10</ecNumber>
    </recommendedName>
    <alternativeName>
        <fullName evidence="1">Type II DHQase</fullName>
    </alternativeName>
</protein>